<keyword id="KW-1185">Reference proteome</keyword>
<dbReference type="EMBL" id="AAFI02000054">
    <property type="protein sequence ID" value="EAL65765.1"/>
    <property type="molecule type" value="Genomic_DNA"/>
</dbReference>
<dbReference type="RefSeq" id="XP_639114.1">
    <property type="nucleotide sequence ID" value="XM_634022.1"/>
</dbReference>
<dbReference type="SMR" id="Q54R69"/>
<dbReference type="FunCoup" id="Q54R69">
    <property type="interactions" value="435"/>
</dbReference>
<dbReference type="PaxDb" id="44689-DDB0218483"/>
<dbReference type="EnsemblProtists" id="EAL65765">
    <property type="protein sequence ID" value="EAL65765"/>
    <property type="gene ID" value="DDB_G0283377"/>
</dbReference>
<dbReference type="GeneID" id="8624047"/>
<dbReference type="KEGG" id="ddi:DDB_G0283377"/>
<dbReference type="dictyBase" id="DDB_G0283377"/>
<dbReference type="VEuPathDB" id="AmoebaDB:DDB_G0283377"/>
<dbReference type="eggNOG" id="ENOG502RDRW">
    <property type="taxonomic scope" value="Eukaryota"/>
</dbReference>
<dbReference type="HOGENOM" id="CLU_621780_0_0_1"/>
<dbReference type="InParanoid" id="Q54R69"/>
<dbReference type="PRO" id="PR:Q54R69"/>
<dbReference type="Proteomes" id="UP000002195">
    <property type="component" value="Chromosome 4"/>
</dbReference>
<dbReference type="GO" id="GO:0016747">
    <property type="term" value="F:acyltransferase activity, transferring groups other than amino-acyl groups"/>
    <property type="evidence" value="ECO:0007669"/>
    <property type="project" value="InterPro"/>
</dbReference>
<dbReference type="Gene3D" id="3.40.630.30">
    <property type="match status" value="1"/>
</dbReference>
<dbReference type="InterPro" id="IPR016181">
    <property type="entry name" value="Acyl_CoA_acyltransferase"/>
</dbReference>
<dbReference type="InterPro" id="IPR000182">
    <property type="entry name" value="GNAT_dom"/>
</dbReference>
<dbReference type="Pfam" id="PF00583">
    <property type="entry name" value="Acetyltransf_1"/>
    <property type="match status" value="1"/>
</dbReference>
<dbReference type="SUPFAM" id="SSF55729">
    <property type="entry name" value="Acyl-CoA N-acyltransferases (Nat)"/>
    <property type="match status" value="1"/>
</dbReference>
<protein>
    <recommendedName>
        <fullName>Uncharacterized protein DDB_G0283377</fullName>
    </recommendedName>
</protein>
<reference key="1">
    <citation type="journal article" date="2005" name="Nature">
        <title>The genome of the social amoeba Dictyostelium discoideum.</title>
        <authorList>
            <person name="Eichinger L."/>
            <person name="Pachebat J.A."/>
            <person name="Gloeckner G."/>
            <person name="Rajandream M.A."/>
            <person name="Sucgang R."/>
            <person name="Berriman M."/>
            <person name="Song J."/>
            <person name="Olsen R."/>
            <person name="Szafranski K."/>
            <person name="Xu Q."/>
            <person name="Tunggal B."/>
            <person name="Kummerfeld S."/>
            <person name="Madera M."/>
            <person name="Konfortov B.A."/>
            <person name="Rivero F."/>
            <person name="Bankier A.T."/>
            <person name="Lehmann R."/>
            <person name="Hamlin N."/>
            <person name="Davies R."/>
            <person name="Gaudet P."/>
            <person name="Fey P."/>
            <person name="Pilcher K."/>
            <person name="Chen G."/>
            <person name="Saunders D."/>
            <person name="Sodergren E.J."/>
            <person name="Davis P."/>
            <person name="Kerhornou A."/>
            <person name="Nie X."/>
            <person name="Hall N."/>
            <person name="Anjard C."/>
            <person name="Hemphill L."/>
            <person name="Bason N."/>
            <person name="Farbrother P."/>
            <person name="Desany B."/>
            <person name="Just E."/>
            <person name="Morio T."/>
            <person name="Rost R."/>
            <person name="Churcher C.M."/>
            <person name="Cooper J."/>
            <person name="Haydock S."/>
            <person name="van Driessche N."/>
            <person name="Cronin A."/>
            <person name="Goodhead I."/>
            <person name="Muzny D.M."/>
            <person name="Mourier T."/>
            <person name="Pain A."/>
            <person name="Lu M."/>
            <person name="Harper D."/>
            <person name="Lindsay R."/>
            <person name="Hauser H."/>
            <person name="James K.D."/>
            <person name="Quiles M."/>
            <person name="Madan Babu M."/>
            <person name="Saito T."/>
            <person name="Buchrieser C."/>
            <person name="Wardroper A."/>
            <person name="Felder M."/>
            <person name="Thangavelu M."/>
            <person name="Johnson D."/>
            <person name="Knights A."/>
            <person name="Loulseged H."/>
            <person name="Mungall K.L."/>
            <person name="Oliver K."/>
            <person name="Price C."/>
            <person name="Quail M.A."/>
            <person name="Urushihara H."/>
            <person name="Hernandez J."/>
            <person name="Rabbinowitsch E."/>
            <person name="Steffen D."/>
            <person name="Sanders M."/>
            <person name="Ma J."/>
            <person name="Kohara Y."/>
            <person name="Sharp S."/>
            <person name="Simmonds M.N."/>
            <person name="Spiegler S."/>
            <person name="Tivey A."/>
            <person name="Sugano S."/>
            <person name="White B."/>
            <person name="Walker D."/>
            <person name="Woodward J.R."/>
            <person name="Winckler T."/>
            <person name="Tanaka Y."/>
            <person name="Shaulsky G."/>
            <person name="Schleicher M."/>
            <person name="Weinstock G.M."/>
            <person name="Rosenthal A."/>
            <person name="Cox E.C."/>
            <person name="Chisholm R.L."/>
            <person name="Gibbs R.A."/>
            <person name="Loomis W.F."/>
            <person name="Platzer M."/>
            <person name="Kay R.R."/>
            <person name="Williams J.G."/>
            <person name="Dear P.H."/>
            <person name="Noegel A.A."/>
            <person name="Barrell B.G."/>
            <person name="Kuspa A."/>
        </authorList>
    </citation>
    <scope>NUCLEOTIDE SEQUENCE [LARGE SCALE GENOMIC DNA]</scope>
    <source>
        <strain>AX4</strain>
    </source>
</reference>
<proteinExistence type="predicted"/>
<gene>
    <name type="ORF">DDB_G0283377</name>
</gene>
<feature type="chain" id="PRO_0000351269" description="Uncharacterized protein DDB_G0283377">
    <location>
        <begin position="1"/>
        <end position="441"/>
    </location>
</feature>
<feature type="region of interest" description="Disordered" evidence="1">
    <location>
        <begin position="121"/>
        <end position="146"/>
    </location>
</feature>
<feature type="region of interest" description="Disordered" evidence="1">
    <location>
        <begin position="371"/>
        <end position="392"/>
    </location>
</feature>
<feature type="compositionally biased region" description="Low complexity" evidence="1">
    <location>
        <begin position="121"/>
        <end position="143"/>
    </location>
</feature>
<feature type="compositionally biased region" description="Polar residues" evidence="1">
    <location>
        <begin position="382"/>
        <end position="391"/>
    </location>
</feature>
<organism>
    <name type="scientific">Dictyostelium discoideum</name>
    <name type="common">Social amoeba</name>
    <dbReference type="NCBI Taxonomy" id="44689"/>
    <lineage>
        <taxon>Eukaryota</taxon>
        <taxon>Amoebozoa</taxon>
        <taxon>Evosea</taxon>
        <taxon>Eumycetozoa</taxon>
        <taxon>Dictyostelia</taxon>
        <taxon>Dictyosteliales</taxon>
        <taxon>Dictyosteliaceae</taxon>
        <taxon>Dictyostelium</taxon>
    </lineage>
</organism>
<name>Y8483_DICDI</name>
<sequence length="441" mass="48960">MAALILRTLLDNNVFSSSDYIHTIKDPLSTSMVEVSGNPQSCGVSEAFSSPSLKKADVSLTFGSSQEISYAAMSAPLNADTSRIPDEIAPTDVNKTELDLSTNNFGVPLADVVLPSSSSTTLSPSIVSEQQQQQQQQQQQQQQAISSEEIITSKGGIKSGAGELPFSIVYGSAFSKTPEIVSFQQPTQKQINDFLQMKSDATRVVTSDGYIFREIFNPDHDDGFKQALEMYGSSFFEPTEPGKNHLHTLCNRGLYRMMVMEDDKGLVLACAFIVEVHAYKSYHMDYLAVRPGIRGGGLGGKFFKQLTTHLRNEQKYLIITFESEPKLVPWYLRMSCLHLNVVSDQVTYENGETFFWWLLVVPLGKIIDDGSDADTDSDSEHPTSAPSTTAPNYALPLSLTEKQRNRSYILYNESGVSYEFNQQTINEIAQYLLTFMSDAKK</sequence>
<accession>Q54R69</accession>
<evidence type="ECO:0000256" key="1">
    <source>
        <dbReference type="SAM" id="MobiDB-lite"/>
    </source>
</evidence>